<evidence type="ECO:0000255" key="1">
    <source>
        <dbReference type="PROSITE-ProRule" id="PRU00040"/>
    </source>
</evidence>
<evidence type="ECO:0000269" key="2">
    <source>
    </source>
</evidence>
<evidence type="ECO:0000305" key="3"/>
<evidence type="ECO:0000305" key="4">
    <source>
    </source>
</evidence>
<keyword id="KW-0903">Direct protein sequencing</keyword>
<keyword id="KW-1015">Disulfide bond</keyword>
<keyword id="KW-1199">Hemostasis impairing toxin</keyword>
<keyword id="KW-1201">Platelet aggregation inhibiting toxin</keyword>
<keyword id="KW-0964">Secreted</keyword>
<keyword id="KW-0732">Signal</keyword>
<keyword id="KW-0800">Toxin</keyword>
<dbReference type="EMBL" id="AF102901">
    <property type="protein sequence ID" value="AAG42040.1"/>
    <property type="molecule type" value="mRNA"/>
</dbReference>
<dbReference type="EMBL" id="AY091762">
    <property type="protein sequence ID" value="AAM22790.1"/>
    <property type="molecule type" value="mRNA"/>
</dbReference>
<dbReference type="SMR" id="Q9DEA2"/>
<dbReference type="GO" id="GO:0005576">
    <property type="term" value="C:extracellular region"/>
    <property type="evidence" value="ECO:0007669"/>
    <property type="project" value="UniProtKB-SubCell"/>
</dbReference>
<dbReference type="GO" id="GO:0090729">
    <property type="term" value="F:toxin activity"/>
    <property type="evidence" value="ECO:0007669"/>
    <property type="project" value="UniProtKB-KW"/>
</dbReference>
<dbReference type="FunFam" id="3.10.100.10:FF:000087">
    <property type="entry name" value="Snaclec rhodocetin subunit delta"/>
    <property type="match status" value="1"/>
</dbReference>
<dbReference type="Gene3D" id="3.10.100.10">
    <property type="entry name" value="Mannose-Binding Protein A, subunit A"/>
    <property type="match status" value="1"/>
</dbReference>
<dbReference type="InterPro" id="IPR001304">
    <property type="entry name" value="C-type_lectin-like"/>
</dbReference>
<dbReference type="InterPro" id="IPR016186">
    <property type="entry name" value="C-type_lectin-like/link_sf"/>
</dbReference>
<dbReference type="InterPro" id="IPR050111">
    <property type="entry name" value="C-type_lectin/snaclec_domain"/>
</dbReference>
<dbReference type="InterPro" id="IPR018378">
    <property type="entry name" value="C-type_lectin_CS"/>
</dbReference>
<dbReference type="InterPro" id="IPR016187">
    <property type="entry name" value="CTDL_fold"/>
</dbReference>
<dbReference type="PANTHER" id="PTHR22803">
    <property type="entry name" value="MANNOSE, PHOSPHOLIPASE, LECTIN RECEPTOR RELATED"/>
    <property type="match status" value="1"/>
</dbReference>
<dbReference type="Pfam" id="PF00059">
    <property type="entry name" value="Lectin_C"/>
    <property type="match status" value="1"/>
</dbReference>
<dbReference type="PRINTS" id="PR01504">
    <property type="entry name" value="PNCREATITSAP"/>
</dbReference>
<dbReference type="SMART" id="SM00034">
    <property type="entry name" value="CLECT"/>
    <property type="match status" value="1"/>
</dbReference>
<dbReference type="SUPFAM" id="SSF56436">
    <property type="entry name" value="C-type lectin-like"/>
    <property type="match status" value="1"/>
</dbReference>
<dbReference type="PROSITE" id="PS00615">
    <property type="entry name" value="C_TYPE_LECTIN_1"/>
    <property type="match status" value="1"/>
</dbReference>
<dbReference type="PROSITE" id="PS50041">
    <property type="entry name" value="C_TYPE_LECTIN_2"/>
    <property type="match status" value="1"/>
</dbReference>
<reference key="1">
    <citation type="journal article" date="2000" name="Thromb. Haemost.">
        <title>Glycoprotein Ib-binding protein from the venom of Deinagkistrodon acutus -- cDNA sequence, functional characterization, and three-dimensional modeling.</title>
        <authorList>
            <person name="Chen Y.L."/>
            <person name="Tsai K.W."/>
            <person name="Chang T."/>
            <person name="Hong T.M."/>
            <person name="Tsai I.H."/>
        </authorList>
    </citation>
    <scope>NUCLEOTIDE SEQUENCE [MRNA]</scope>
    <source>
        <tissue>Venom gland</tissue>
    </source>
</reference>
<reference key="2">
    <citation type="submission" date="2002-03" db="EMBL/GenBank/DDBJ databases">
        <title>A chain of antithrombin A from Deinagkistrodon acutus.</title>
        <authorList>
            <person name="Yu H."/>
            <person name="Xiang K."/>
            <person name="Wang Y."/>
            <person name="Liu J."/>
        </authorList>
    </citation>
    <scope>NUCLEOTIDE SEQUENCE [MRNA]</scope>
    <source>
        <tissue>Venom gland</tissue>
    </source>
</reference>
<reference key="3">
    <citation type="journal article" date="2005" name="Toxicon">
        <title>How does agkicetin-C bind on platelet glycoprotein Ibalpha and achieve its platelet effects?</title>
        <authorList>
            <person name="Xu G."/>
            <person name="Ulrichts H."/>
            <person name="Vauterin S."/>
            <person name="De Meyer S.F."/>
            <person name="Deckmyn H."/>
            <person name="Teng M."/>
            <person name="Niu L."/>
        </authorList>
    </citation>
    <scope>PROTEIN SEQUENCE OF 24-32</scope>
    <scope>FUNCTION</scope>
    <source>
        <tissue>Venom</tissue>
    </source>
</reference>
<reference key="4">
    <citation type="journal article" date="2005" name="Acta Crystallogr. F">
        <title>Crystallization and preliminary X-ray crystallographic analysis of agkicetin-C from Deinagkistrodon acutus venom.</title>
        <authorList>
            <person name="Xu G."/>
            <person name="Huang Q."/>
            <person name="Teng M."/>
            <person name="Liu P."/>
            <person name="Dong Y."/>
            <person name="Niu L."/>
        </authorList>
    </citation>
    <scope>CRYSTALLIZATION</scope>
</reference>
<proteinExistence type="evidence at protein level"/>
<name>SLCA_DEIAC</name>
<comment type="function">
    <text evidence="2">Is a potent glycoprotein Ibalpha (GP1BA) antagonist. Concentration-dependently inhibits botrocetin-, ristocetin- and low dose thrombin-induced platelet aggregation. Inhibits platelet adhesion only through inhibiting the vWF interaction with GP1BA, but has minimal effect on other platelet receptors, such as alpha-IIb/beta-3 (ITGA2B/ITGB3) or alpha-2/beta-1 (ITGA2/ITGB1). Causes an instant severe thrombocytopenia in rats and is not lethal to mice.</text>
</comment>
<comment type="subunit">
    <text>Heterodimer of subunits alpha and beta; disulfide-linked.</text>
</comment>
<comment type="subcellular location">
    <subcellularLocation>
        <location>Secreted</location>
    </subcellularLocation>
</comment>
<comment type="tissue specificity">
    <text>Expressed by the venom gland.</text>
</comment>
<comment type="miscellaneous">
    <text evidence="4">Negative results: lacks hemorrhagic activity in rabbits. Has no inhibitory effect on the coagulation cascade of humans. Does not agglutinate human erythrocytes of four groups (AC, BC, OC, ABK) and rabbit erythrocytes as well, which indicates it is not really a lectin (PubMed:15777951).</text>
</comment>
<comment type="similarity">
    <text evidence="3">Belongs to the snaclec family.</text>
</comment>
<protein>
    <recommendedName>
        <fullName>Snaclec agkicetin-C subunit alpha</fullName>
    </recommendedName>
    <alternativeName>
        <fullName>Antithrombin A subunit A</fullName>
    </alternativeName>
</protein>
<accession>Q9DEA2</accession>
<accession>Q8JIV6</accession>
<sequence length="155" mass="17799">MGRFIFVSFGLLVVFLSLSGTAADCLPGWSSYIRFCYQPFKLLKTWEDAERFCTEQANGGHLVSFESAREADFVAGVLSENIKIKPYVWIGLRVQNEGQQCSSKWSDSSKVSYENLVEPFSKKCFVLKKDTGFRTWENVYCGLKHVFMCKYLKPR</sequence>
<feature type="signal peptide" evidence="2">
    <location>
        <begin position="1"/>
        <end position="23"/>
    </location>
</feature>
<feature type="chain" id="PRO_5000055286" description="Snaclec agkicetin-C subunit alpha">
    <location>
        <begin position="24"/>
        <end position="155"/>
    </location>
</feature>
<feature type="domain" description="C-type lectin" evidence="1">
    <location>
        <begin position="32"/>
        <end position="150"/>
    </location>
</feature>
<feature type="disulfide bond" evidence="1">
    <location>
        <begin position="25"/>
        <end position="36"/>
    </location>
</feature>
<feature type="disulfide bond" evidence="1">
    <location>
        <begin position="53"/>
        <end position="149"/>
    </location>
</feature>
<feature type="disulfide bond" description="Interchain (with C-98 in subunit beta)" evidence="1">
    <location>
        <position position="101"/>
    </location>
</feature>
<feature type="disulfide bond" evidence="1">
    <location>
        <begin position="124"/>
        <end position="141"/>
    </location>
</feature>
<feature type="sequence conflict" description="In Ref. 2; AAM22790." evidence="3" ref="2">
    <original>S</original>
    <variation>C</variation>
    <location>
        <position position="31"/>
    </location>
</feature>
<feature type="sequence conflict" description="In Ref. 2; AAM22790." evidence="3" ref="2">
    <original>R</original>
    <variation>G</variation>
    <location>
        <position position="69"/>
    </location>
</feature>
<organism>
    <name type="scientific">Deinagkistrodon acutus</name>
    <name type="common">Hundred-pace snake</name>
    <name type="synonym">Agkistrodon acutus</name>
    <dbReference type="NCBI Taxonomy" id="36307"/>
    <lineage>
        <taxon>Eukaryota</taxon>
        <taxon>Metazoa</taxon>
        <taxon>Chordata</taxon>
        <taxon>Craniata</taxon>
        <taxon>Vertebrata</taxon>
        <taxon>Euteleostomi</taxon>
        <taxon>Lepidosauria</taxon>
        <taxon>Squamata</taxon>
        <taxon>Bifurcata</taxon>
        <taxon>Unidentata</taxon>
        <taxon>Episquamata</taxon>
        <taxon>Toxicofera</taxon>
        <taxon>Serpentes</taxon>
        <taxon>Colubroidea</taxon>
        <taxon>Viperidae</taxon>
        <taxon>Crotalinae</taxon>
        <taxon>Deinagkistrodon</taxon>
    </lineage>
</organism>